<keyword id="KW-0393">Immunoglobulin domain</keyword>
<keyword id="KW-1185">Reference proteome</keyword>
<keyword id="KW-0677">Repeat</keyword>
<proteinExistence type="evidence at transcript level"/>
<dbReference type="EMBL" id="X00353">
    <property type="protein sequence ID" value="CAA25100.1"/>
    <property type="molecule type" value="mRNA"/>
</dbReference>
<dbReference type="PIR" id="A02174">
    <property type="entry name" value="AHRB"/>
</dbReference>
<dbReference type="SMR" id="P01879"/>
<dbReference type="STRING" id="9986.ENSOCUP00000043537"/>
<dbReference type="InParanoid" id="P01879"/>
<dbReference type="Proteomes" id="UP000001811">
    <property type="component" value="Unplaced"/>
</dbReference>
<dbReference type="CDD" id="cd04986">
    <property type="entry name" value="IgC1_CH2_IgA"/>
    <property type="match status" value="1"/>
</dbReference>
<dbReference type="CDD" id="cd05768">
    <property type="entry name" value="IgC1_CH3_IgAGD_CH4_IgAEM"/>
    <property type="match status" value="1"/>
</dbReference>
<dbReference type="FunFam" id="2.60.40.10:FF:000463">
    <property type="entry name" value="Immunoglobulin heavy constant gamma 1"/>
    <property type="match status" value="1"/>
</dbReference>
<dbReference type="Gene3D" id="2.60.40.10">
    <property type="entry name" value="Immunoglobulins"/>
    <property type="match status" value="2"/>
</dbReference>
<dbReference type="InterPro" id="IPR007110">
    <property type="entry name" value="Ig-like_dom"/>
</dbReference>
<dbReference type="InterPro" id="IPR036179">
    <property type="entry name" value="Ig-like_dom_sf"/>
</dbReference>
<dbReference type="InterPro" id="IPR013783">
    <property type="entry name" value="Ig-like_fold"/>
</dbReference>
<dbReference type="InterPro" id="IPR003006">
    <property type="entry name" value="Ig/MHC_CS"/>
</dbReference>
<dbReference type="InterPro" id="IPR003597">
    <property type="entry name" value="Ig_C1-set"/>
</dbReference>
<dbReference type="InterPro" id="IPR003599">
    <property type="entry name" value="Ig_sub"/>
</dbReference>
<dbReference type="InterPro" id="IPR050380">
    <property type="entry name" value="Immune_Resp_Modulators"/>
</dbReference>
<dbReference type="PANTHER" id="PTHR23411">
    <property type="entry name" value="TAPASIN"/>
    <property type="match status" value="1"/>
</dbReference>
<dbReference type="Pfam" id="PF07654">
    <property type="entry name" value="C1-set"/>
    <property type="match status" value="2"/>
</dbReference>
<dbReference type="SMART" id="SM00409">
    <property type="entry name" value="IG"/>
    <property type="match status" value="2"/>
</dbReference>
<dbReference type="SMART" id="SM00407">
    <property type="entry name" value="IGc1"/>
    <property type="match status" value="2"/>
</dbReference>
<dbReference type="SUPFAM" id="SSF48726">
    <property type="entry name" value="Immunoglobulin"/>
    <property type="match status" value="2"/>
</dbReference>
<dbReference type="PROSITE" id="PS50835">
    <property type="entry name" value="IG_LIKE"/>
    <property type="match status" value="2"/>
</dbReference>
<dbReference type="PROSITE" id="PS00290">
    <property type="entry name" value="IG_MHC"/>
    <property type="match status" value="2"/>
</dbReference>
<feature type="chain" id="PRO_0000153569" description="Ig alpha chain C region">
    <location>
        <begin position="1" status="less than"/>
        <end position="299"/>
    </location>
</feature>
<feature type="domain" description="Ig-like 1">
    <location>
        <begin position="71"/>
        <end position="167"/>
    </location>
</feature>
<feature type="domain" description="Ig-like 2">
    <location>
        <begin position="174"/>
        <end position="276"/>
    </location>
</feature>
<feature type="non-terminal residue">
    <location>
        <position position="1"/>
    </location>
</feature>
<comment type="function">
    <text>Ig alpha is the major immunoglobulin class in body secretions. It may serve both to defend against local infection and to prevent access of foreign antigens to the general immunologic system.</text>
</comment>
<comment type="miscellaneous">
    <text>This immunoglobulin belongs to the IgA-G subclass. It was isolated from a rabbit homozygous FOR A2, N80, DE12, 15, F71, G75 heavy chain haplotype.</text>
</comment>
<protein>
    <recommendedName>
        <fullName>Ig alpha chain C region</fullName>
    </recommendedName>
</protein>
<reference key="1">
    <citation type="journal article" date="1984" name="Nucleic Acids Res.">
        <title>Genes encoding alpha-heavy chains of rabbit IgA: characterization of cDNA encoding IgA-g subclass alpha-chains.</title>
        <authorList>
            <person name="Knight K.L."/>
            <person name="Martens C.L."/>
            <person name="Stoklosa C.M."/>
            <person name="Schneiderman R.D."/>
        </authorList>
    </citation>
    <scope>NUCLEOTIDE SEQUENCE [MRNA]</scope>
</reference>
<name>IGHA_RABIT</name>
<accession>P01879</accession>
<organism>
    <name type="scientific">Oryctolagus cuniculus</name>
    <name type="common">Rabbit</name>
    <dbReference type="NCBI Taxonomy" id="9986"/>
    <lineage>
        <taxon>Eukaryota</taxon>
        <taxon>Metazoa</taxon>
        <taxon>Chordata</taxon>
        <taxon>Craniata</taxon>
        <taxon>Vertebrata</taxon>
        <taxon>Euteleostomi</taxon>
        <taxon>Mammalia</taxon>
        <taxon>Eutheria</taxon>
        <taxon>Euarchontoglires</taxon>
        <taxon>Glires</taxon>
        <taxon>Lagomorpha</taxon>
        <taxon>Leporidae</taxon>
        <taxon>Oryctolagus</taxon>
    </lineage>
</organism>
<sequence length="299" mass="32256">QSGTSGPYTACSELILPVTQCLGQKSAACHVEYNSVINESLPVPFPDCCPANSCCTCPSSSSRNLISGCQPSLSLQRPDLGDLLLGRDASLTCTLSGLKNPEDAVFTWEPTNGNEPVQQRAQRDLSGCYSVSSVLPSSAETWKARTEFTCTVTHPEIDSGSLTATISRGVVTPPQVHLLPPPSEELALNEQVTLTCLVRGFSPKDVLVSWRHQGQEVPEDSFLVWKSMPESSQDKATYAITSLLRVPAEDWNQGDTYSCMVGHEGLAEHFTQKTIDRLAGKPTHVNVSVVVADVEAVCY</sequence>